<evidence type="ECO:0000255" key="1"/>
<evidence type="ECO:0000305" key="2"/>
<comment type="function">
    <text>One of the determinants for resistance to ethidium bromide and quaternary ammonium compounds.</text>
</comment>
<comment type="subcellular location">
    <subcellularLocation>
        <location evidence="2">Cell membrane</location>
        <topology evidence="2">Multi-pass membrane protein</topology>
    </subcellularLocation>
</comment>
<comment type="similarity">
    <text evidence="2">Belongs to the drug/metabolite transporter (DMT) superfamily. Small multidrug resistance (SMR) (TC 2.A.7.1) family.</text>
</comment>
<dbReference type="EMBL" id="X12870">
    <property type="protein sequence ID" value="CAB37322.1"/>
    <property type="molecule type" value="Genomic_DNA"/>
</dbReference>
<dbReference type="EMBL" id="X12868">
    <property type="protein sequence ID" value="CAA31357.1"/>
    <property type="molecule type" value="Genomic_DNA"/>
</dbReference>
<dbReference type="EMBL" id="AF047479">
    <property type="protein sequence ID" value="AAC14738.1"/>
    <property type="molecule type" value="Genomic_DNA"/>
</dbReference>
<dbReference type="EMBL" id="X58425">
    <property type="protein sequence ID" value="CAA41327.1"/>
    <property type="molecule type" value="Genomic_DNA"/>
</dbReference>
<dbReference type="PIR" id="B41857">
    <property type="entry name" value="B41857"/>
</dbReference>
<dbReference type="RefSeq" id="NP_863001.1">
    <property type="nucleotide sequence ID" value="NC_004998.1"/>
</dbReference>
<dbReference type="RefSeq" id="YP_001096355.1">
    <property type="nucleotide sequence ID" value="NC_009132.1"/>
</dbReference>
<dbReference type="RefSeq" id="YP_001096412.1">
    <property type="nucleotide sequence ID" value="NC_009133.1"/>
</dbReference>
<dbReference type="RefSeq" id="YP_001816599.1">
    <property type="nucleotide sequence ID" value="NC_010558.1"/>
</dbReference>
<dbReference type="RefSeq" id="YP_002527544.1">
    <property type="nucleotide sequence ID" value="NC_011964.1"/>
</dbReference>
<dbReference type="RefSeq" id="YP_002891163.1">
    <property type="nucleotide sequence ID" value="NC_012690.1"/>
</dbReference>
<dbReference type="RefSeq" id="YP_002894491.1">
    <property type="nucleotide sequence ID" value="NC_012692.1"/>
</dbReference>
<dbReference type="RefSeq" id="YP_004558214.1">
    <property type="nucleotide sequence ID" value="NC_015599.1"/>
</dbReference>
<dbReference type="RefSeq" id="YP_006903339.1">
    <property type="nucleotide sequence ID" value="NC_019045.2"/>
</dbReference>
<dbReference type="RefSeq" id="YP_006939956.1">
    <property type="nucleotide sequence ID" value="NC_018994.1"/>
</dbReference>
<dbReference type="RefSeq" id="YP_006952406.1">
    <property type="nucleotide sequence ID" value="NC_019062.1"/>
</dbReference>
<dbReference type="RefSeq" id="YP_006952977.1">
    <property type="nucleotide sequence ID" value="NC_019066.1"/>
</dbReference>
<dbReference type="RefSeq" id="YP_006953196.1">
    <property type="nucleotide sequence ID" value="NC_019069.1"/>
</dbReference>
<dbReference type="RefSeq" id="YP_006953611.1">
    <property type="nucleotide sequence ID" value="NC_019081.1"/>
</dbReference>
<dbReference type="RefSeq" id="YP_006953619.1">
    <property type="nucleotide sequence ID" value="NC_019082.1"/>
</dbReference>
<dbReference type="RefSeq" id="YP_006953870.1">
    <property type="nucleotide sequence ID" value="NC_019089.1"/>
</dbReference>
<dbReference type="RefSeq" id="YP_006953992.1">
    <property type="nucleotide sequence ID" value="NC_019091.1"/>
</dbReference>
<dbReference type="RefSeq" id="YP_008574824.1">
    <property type="nucleotide sequence ID" value="NC_022374.1"/>
</dbReference>
<dbReference type="RefSeq" id="YP_009023103.1">
    <property type="nucleotide sequence ID" value="NC_023909.1"/>
</dbReference>
<dbReference type="RefSeq" id="YP_009061086.1">
    <property type="nucleotide sequence ID" value="NC_024975.1"/>
</dbReference>
<dbReference type="RefSeq" id="YP_009061436.1">
    <property type="nucleotide sequence ID" value="NC_024978.1"/>
</dbReference>
<dbReference type="RefSeq" id="YP_009061693.1">
    <property type="nucleotide sequence ID" value="NC_024980.1"/>
</dbReference>
<dbReference type="RefSeq" id="YP_009066445.1">
    <property type="nucleotide sequence ID" value="NC_025106.1"/>
</dbReference>
<dbReference type="RefSeq" id="YP_009068293.1">
    <property type="nucleotide sequence ID" value="NC_025139.1"/>
</dbReference>
<dbReference type="RefSeq" id="YP_009070795.1">
    <property type="nucleotide sequence ID" value="NC_025175.1"/>
</dbReference>
<dbReference type="RefSeq" id="YP_009182146.1">
    <property type="nucleotide sequence ID" value="NC_028464.1"/>
</dbReference>
<dbReference type="RefSeq" id="YP_724470.1">
    <property type="nucleotide sequence ID" value="NC_007682.3"/>
</dbReference>
<dbReference type="SMR" id="P0AA22"/>
<dbReference type="OMA" id="EGFTQAW"/>
<dbReference type="GO" id="GO:0005886">
    <property type="term" value="C:plasma membrane"/>
    <property type="evidence" value="ECO:0007669"/>
    <property type="project" value="UniProtKB-SubCell"/>
</dbReference>
<dbReference type="GO" id="GO:0022857">
    <property type="term" value="F:transmembrane transporter activity"/>
    <property type="evidence" value="ECO:0007669"/>
    <property type="project" value="InterPro"/>
</dbReference>
<dbReference type="FunFam" id="1.10.3730.20:FF:000001">
    <property type="entry name" value="Quaternary ammonium compound resistance transporter SugE"/>
    <property type="match status" value="1"/>
</dbReference>
<dbReference type="Gene3D" id="1.10.3730.20">
    <property type="match status" value="1"/>
</dbReference>
<dbReference type="InterPro" id="IPR000390">
    <property type="entry name" value="Small_drug/metabolite_transptr"/>
</dbReference>
<dbReference type="InterPro" id="IPR045324">
    <property type="entry name" value="Small_multidrug_res"/>
</dbReference>
<dbReference type="NCBIfam" id="NF000276">
    <property type="entry name" value="SMR_qac_E"/>
    <property type="match status" value="1"/>
</dbReference>
<dbReference type="PANTHER" id="PTHR30561:SF1">
    <property type="entry name" value="MULTIDRUG TRANSPORTER EMRE"/>
    <property type="match status" value="1"/>
</dbReference>
<dbReference type="PANTHER" id="PTHR30561">
    <property type="entry name" value="SMR FAMILY PROTON-DEPENDENT DRUG EFFLUX TRANSPORTER SUGE"/>
    <property type="match status" value="1"/>
</dbReference>
<dbReference type="Pfam" id="PF00893">
    <property type="entry name" value="Multi_Drug_Res"/>
    <property type="match status" value="1"/>
</dbReference>
<dbReference type="SUPFAM" id="SSF103481">
    <property type="entry name" value="Multidrug resistance efflux transporter EmrE"/>
    <property type="match status" value="1"/>
</dbReference>
<name>EBR_ECOLX</name>
<geneLocation type="plasmid">
    <name>pLMO20</name>
</geneLocation>
<geneLocation type="plasmid">
    <name>pLMO27</name>
</geneLocation>
<geneLocation type="plasmid">
    <name>IncFII NR79</name>
</geneLocation>
<protein>
    <recommendedName>
        <fullName>Putative ethidium bromide resistance protein</fullName>
    </recommendedName>
    <alternativeName>
        <fullName>E1 protein</fullName>
    </alternativeName>
</protein>
<sequence>MKGWLFLVIAIVGEVIATSALKSSEGFTKLAPSAVVIIGYGIAFYFLSLVLKSIPVGVAYAVWSGLGVVIITAIAWLLHGQKLDAWGFVGMGLIIAAFLLARSPSWKSLRRPTPW</sequence>
<reference key="1">
    <citation type="journal article" date="1988" name="Mol. Gen. Genet.">
        <title>Site-specific recombination promotes linkage between trimethoprim- and sulfonamide resistance genes. Sequence characterization of dhfrV and sulI and a recombination active locus of Tn21.</title>
        <authorList>
            <person name="Sundstroem L."/>
            <person name="Radstroem P."/>
            <person name="Swedberg G."/>
            <person name="Skoeld O."/>
        </authorList>
    </citation>
    <scope>NUCLEOTIDE SEQUENCE [GENOMIC DNA]</scope>
    <source>
        <plasmid>pLMO20</plasmid>
    </source>
</reference>
<reference key="2">
    <citation type="submission" date="1989-11" db="EMBL/GenBank/DDBJ databases">
        <authorList>
            <person name="Sundstroem L."/>
        </authorList>
    </citation>
    <scope>SEQUENCE REVISION</scope>
    <source>
        <plasmid>pLMO20</plasmid>
    </source>
</reference>
<reference key="3">
    <citation type="journal article" date="1992" name="J. Bacteriol.">
        <title>The chloramphenicol acetyltransferase gene of Tn2424: a new breed of cat.</title>
        <authorList>
            <person name="Parent R."/>
            <person name="Roy P.H."/>
        </authorList>
    </citation>
    <scope>NUCLEOTIDE SEQUENCE [GENOMIC DNA]</scope>
    <source>
        <plasmid>IncFII NR79</plasmid>
        <transposon>Tn2424</transposon>
    </source>
</reference>
<reference key="4">
    <citation type="journal article" date="1994" name="J. Bacteriol.">
        <title>Transposon Tn5090 of plasmid R751, which carries an integron, is related to Tn7, Mu, and the retroelements.</title>
        <authorList>
            <person name="Raadstroem P."/>
            <person name="Skoeld O."/>
            <person name="Swedberg G."/>
            <person name="Flensburg J."/>
            <person name="Roy P.H."/>
            <person name="Sundstroem L."/>
        </authorList>
    </citation>
    <scope>NUCLEOTIDE SEQUENCE [GENOMIC DNA]</scope>
    <source>
        <plasmid>pLMO27</plasmid>
        <transposon>Tn5086</transposon>
    </source>
</reference>
<proteinExistence type="inferred from homology"/>
<organism>
    <name type="scientific">Escherichia coli</name>
    <dbReference type="NCBI Taxonomy" id="562"/>
    <lineage>
        <taxon>Bacteria</taxon>
        <taxon>Pseudomonadati</taxon>
        <taxon>Pseudomonadota</taxon>
        <taxon>Gammaproteobacteria</taxon>
        <taxon>Enterobacterales</taxon>
        <taxon>Enterobacteriaceae</taxon>
        <taxon>Escherichia</taxon>
    </lineage>
</organism>
<keyword id="KW-1003">Cell membrane</keyword>
<keyword id="KW-0472">Membrane</keyword>
<keyword id="KW-0614">Plasmid</keyword>
<keyword id="KW-0812">Transmembrane</keyword>
<keyword id="KW-1133">Transmembrane helix</keyword>
<keyword id="KW-0813">Transport</keyword>
<keyword id="KW-0814">Transposable element</keyword>
<feature type="chain" id="PRO_0000108071" description="Putative ethidium bromide resistance protein">
    <location>
        <begin position="1"/>
        <end position="115"/>
    </location>
</feature>
<feature type="transmembrane region" description="Helical" evidence="1">
    <location>
        <begin position="4"/>
        <end position="21"/>
    </location>
</feature>
<feature type="transmembrane region" description="Helical" evidence="1">
    <location>
        <begin position="30"/>
        <end position="47"/>
    </location>
</feature>
<feature type="transmembrane region" description="Helical" evidence="1">
    <location>
        <begin position="58"/>
        <end position="79"/>
    </location>
</feature>
<feature type="transmembrane region" description="Helical" evidence="1">
    <location>
        <begin position="85"/>
        <end position="104"/>
    </location>
</feature>
<accession>P0AA22</accession>
<accession>P14502</accession>
<gene>
    <name type="primary">ebr</name>
    <name type="synonym">E1</name>
</gene>